<gene>
    <name evidence="1" type="primary">arcA</name>
    <name type="ordered locus">BG0868</name>
</gene>
<dbReference type="EC" id="3.5.3.6" evidence="1"/>
<dbReference type="EMBL" id="CP000013">
    <property type="protein sequence ID" value="AAU07690.1"/>
    <property type="molecule type" value="Genomic_DNA"/>
</dbReference>
<dbReference type="RefSeq" id="WP_011194134.1">
    <property type="nucleotide sequence ID" value="NZ_CP028872.1"/>
</dbReference>
<dbReference type="SMR" id="Q65ZT1"/>
<dbReference type="GeneID" id="45161640"/>
<dbReference type="KEGG" id="bga:BG0868"/>
<dbReference type="eggNOG" id="COG2235">
    <property type="taxonomic scope" value="Bacteria"/>
</dbReference>
<dbReference type="HOGENOM" id="CLU_052662_0_1_12"/>
<dbReference type="OrthoDB" id="9807502at2"/>
<dbReference type="UniPathway" id="UPA00254">
    <property type="reaction ID" value="UER00364"/>
</dbReference>
<dbReference type="Proteomes" id="UP000002276">
    <property type="component" value="Chromosome"/>
</dbReference>
<dbReference type="GO" id="GO:0005737">
    <property type="term" value="C:cytoplasm"/>
    <property type="evidence" value="ECO:0007669"/>
    <property type="project" value="UniProtKB-SubCell"/>
</dbReference>
<dbReference type="GO" id="GO:0016990">
    <property type="term" value="F:arginine deiminase activity"/>
    <property type="evidence" value="ECO:0007669"/>
    <property type="project" value="UniProtKB-UniRule"/>
</dbReference>
<dbReference type="GO" id="GO:0019547">
    <property type="term" value="P:arginine catabolic process to ornithine"/>
    <property type="evidence" value="ECO:0007669"/>
    <property type="project" value="UniProtKB-UniRule"/>
</dbReference>
<dbReference type="GO" id="GO:0019546">
    <property type="term" value="P:arginine deiminase pathway"/>
    <property type="evidence" value="ECO:0007669"/>
    <property type="project" value="TreeGrafter"/>
</dbReference>
<dbReference type="Gene3D" id="1.10.3930.10">
    <property type="entry name" value="Arginine deiminase"/>
    <property type="match status" value="1"/>
</dbReference>
<dbReference type="Gene3D" id="3.75.10.10">
    <property type="entry name" value="L-arginine/glycine Amidinotransferase, Chain A"/>
    <property type="match status" value="1"/>
</dbReference>
<dbReference type="HAMAP" id="MF_00242">
    <property type="entry name" value="Arg_deiminase"/>
    <property type="match status" value="1"/>
</dbReference>
<dbReference type="InterPro" id="IPR003876">
    <property type="entry name" value="Arg_deiminase"/>
</dbReference>
<dbReference type="NCBIfam" id="TIGR01078">
    <property type="entry name" value="arcA"/>
    <property type="match status" value="1"/>
</dbReference>
<dbReference type="NCBIfam" id="NF002381">
    <property type="entry name" value="PRK01388.1"/>
    <property type="match status" value="1"/>
</dbReference>
<dbReference type="PANTHER" id="PTHR47271">
    <property type="entry name" value="ARGININE DEIMINASE"/>
    <property type="match status" value="1"/>
</dbReference>
<dbReference type="PANTHER" id="PTHR47271:SF2">
    <property type="entry name" value="ARGININE DEIMINASE"/>
    <property type="match status" value="1"/>
</dbReference>
<dbReference type="Pfam" id="PF02274">
    <property type="entry name" value="ADI"/>
    <property type="match status" value="1"/>
</dbReference>
<dbReference type="PIRSF" id="PIRSF006356">
    <property type="entry name" value="Arg_deiminase"/>
    <property type="match status" value="1"/>
</dbReference>
<dbReference type="PRINTS" id="PR01466">
    <property type="entry name" value="ARGDEIMINASE"/>
</dbReference>
<dbReference type="SUPFAM" id="SSF55909">
    <property type="entry name" value="Pentein"/>
    <property type="match status" value="1"/>
</dbReference>
<sequence length="409" mass="46690">MEGYLNPINIFSEIGRLKKVLLHRPGEELENLTPFIMKKFLFDDIPYLEVARQEHEVFASTLKNNSVEIEYVEDLVSEVLASSVALKDKFISQFILEAEIKTDSTINILKDYFSNLTIDNMVSKMISGIVSKELKNYVSSLDDLVNSASLFIIDPMPNVLFTRDPFASIGNGITINKMSNKVRHRETIFAEYIFKYHPIYKKNVPIWFNRWEESSLEGGDEFVLSKDILVIGISERTEAESVEKLAISLFKNKTSFNTILAFKIPKNRAYMHLDTVFTQIDYSVFTSFTSDDMYFSIYALTYNSSSSKIHVKEEKARLRDVLSFYLGRKIDIIKCAGGDLIHGAREQWNDGANILAIAPGEVIAYSRNHVTNKLFEENGIKVYRIPSSELSRGRGGPRCMSMPLVREDI</sequence>
<evidence type="ECO:0000255" key="1">
    <source>
        <dbReference type="HAMAP-Rule" id="MF_00242"/>
    </source>
</evidence>
<feature type="chain" id="PRO_0000182204" description="Arginine deiminase">
    <location>
        <begin position="1"/>
        <end position="409"/>
    </location>
</feature>
<feature type="active site" description="Amidino-cysteine intermediate" evidence="1">
    <location>
        <position position="399"/>
    </location>
</feature>
<protein>
    <recommendedName>
        <fullName evidence="1">Arginine deiminase</fullName>
        <shortName evidence="1">ADI</shortName>
        <ecNumber evidence="1">3.5.3.6</ecNumber>
    </recommendedName>
    <alternativeName>
        <fullName evidence="1">Arginine dihydrolase</fullName>
        <shortName evidence="1">AD</shortName>
    </alternativeName>
</protein>
<reference key="1">
    <citation type="journal article" date="2004" name="Nucleic Acids Res.">
        <title>Comparative analysis of the Borrelia garinii genome.</title>
        <authorList>
            <person name="Gloeckner G."/>
            <person name="Lehmann R."/>
            <person name="Romualdi A."/>
            <person name="Pradella S."/>
            <person name="Schulte-Spechtel U."/>
            <person name="Schilhabel M."/>
            <person name="Wilske B."/>
            <person name="Suehnel J."/>
            <person name="Platzer M."/>
        </authorList>
    </citation>
    <scope>NUCLEOTIDE SEQUENCE [LARGE SCALE GENOMIC DNA]</scope>
    <source>
        <strain>ATCC BAA-2496 / DSM 23469 / PBi</strain>
    </source>
</reference>
<keyword id="KW-0056">Arginine metabolism</keyword>
<keyword id="KW-0963">Cytoplasm</keyword>
<keyword id="KW-0378">Hydrolase</keyword>
<accession>Q65ZT1</accession>
<comment type="catalytic activity">
    <reaction evidence="1">
        <text>L-arginine + H2O = L-citrulline + NH4(+)</text>
        <dbReference type="Rhea" id="RHEA:19597"/>
        <dbReference type="ChEBI" id="CHEBI:15377"/>
        <dbReference type="ChEBI" id="CHEBI:28938"/>
        <dbReference type="ChEBI" id="CHEBI:32682"/>
        <dbReference type="ChEBI" id="CHEBI:57743"/>
        <dbReference type="EC" id="3.5.3.6"/>
    </reaction>
</comment>
<comment type="pathway">
    <text evidence="1">Amino-acid degradation; L-arginine degradation via ADI pathway; carbamoyl phosphate from L-arginine: step 1/2.</text>
</comment>
<comment type="subcellular location">
    <subcellularLocation>
        <location evidence="1">Cytoplasm</location>
    </subcellularLocation>
</comment>
<comment type="similarity">
    <text evidence="1">Belongs to the arginine deiminase family.</text>
</comment>
<name>ARCA_BORGP</name>
<organism>
    <name type="scientific">Borrelia garinii subsp. bavariensis (strain ATCC BAA-2496 / DSM 23469 / PBi)</name>
    <name type="common">Borreliella bavariensis</name>
    <dbReference type="NCBI Taxonomy" id="290434"/>
    <lineage>
        <taxon>Bacteria</taxon>
        <taxon>Pseudomonadati</taxon>
        <taxon>Spirochaetota</taxon>
        <taxon>Spirochaetia</taxon>
        <taxon>Spirochaetales</taxon>
        <taxon>Borreliaceae</taxon>
        <taxon>Borreliella</taxon>
    </lineage>
</organism>
<proteinExistence type="inferred from homology"/>